<keyword id="KW-0249">Electron transport</keyword>
<keyword id="KW-0472">Membrane</keyword>
<keyword id="KW-0496">Mitochondrion</keyword>
<keyword id="KW-0520">NAD</keyword>
<keyword id="KW-0679">Respiratory chain</keyword>
<keyword id="KW-1278">Translocase</keyword>
<keyword id="KW-0812">Transmembrane</keyword>
<keyword id="KW-1133">Transmembrane helix</keyword>
<keyword id="KW-0813">Transport</keyword>
<keyword id="KW-0830">Ubiquinone</keyword>
<comment type="function">
    <text evidence="1">Core subunit of the mitochondrial membrane respiratory chain NADH dehydrogenase (Complex I) that is believed to belong to the minimal assembly required for catalysis. Complex I functions in the transfer of electrons from NADH to the respiratory chain. The immediate electron acceptor for the enzyme is believed to be ubiquinone (By similarity).</text>
</comment>
<comment type="catalytic activity">
    <reaction>
        <text>a ubiquinone + NADH + 5 H(+)(in) = a ubiquinol + NAD(+) + 4 H(+)(out)</text>
        <dbReference type="Rhea" id="RHEA:29091"/>
        <dbReference type="Rhea" id="RHEA-COMP:9565"/>
        <dbReference type="Rhea" id="RHEA-COMP:9566"/>
        <dbReference type="ChEBI" id="CHEBI:15378"/>
        <dbReference type="ChEBI" id="CHEBI:16389"/>
        <dbReference type="ChEBI" id="CHEBI:17976"/>
        <dbReference type="ChEBI" id="CHEBI:57540"/>
        <dbReference type="ChEBI" id="CHEBI:57945"/>
        <dbReference type="EC" id="7.1.1.2"/>
    </reaction>
</comment>
<comment type="subcellular location">
    <subcellularLocation>
        <location evidence="1">Mitochondrion membrane</location>
        <topology evidence="1">Multi-pass membrane protein</topology>
    </subcellularLocation>
</comment>
<comment type="similarity">
    <text evidence="3">Belongs to the complex I subunit 3 family.</text>
</comment>
<gene>
    <name type="primary">MT-ND3</name>
    <name type="synonym">MTND3</name>
    <name type="synonym">NADH3</name>
    <name type="synonym">ND3</name>
</gene>
<accession>P92817</accession>
<protein>
    <recommendedName>
        <fullName>NADH-ubiquinone oxidoreductase chain 3</fullName>
        <ecNumber>7.1.1.2</ecNumber>
    </recommendedName>
    <alternativeName>
        <fullName>NADH dehydrogenase subunit 3</fullName>
    </alternativeName>
</protein>
<name>NU3M_PAROL</name>
<reference key="1">
    <citation type="submission" date="1997-01" db="EMBL/GenBank/DDBJ databases">
        <title>Characterization of cloned mitochondrial fragments from the Japanese flounder.</title>
        <authorList>
            <person name="Saitoh K."/>
        </authorList>
    </citation>
    <scope>NUCLEOTIDE SEQUENCE [GENOMIC DNA]</scope>
    <source>
        <tissue>Liver</tissue>
    </source>
</reference>
<evidence type="ECO:0000250" key="1"/>
<evidence type="ECO:0000255" key="2"/>
<evidence type="ECO:0000305" key="3"/>
<feature type="chain" id="PRO_0000117791" description="NADH-ubiquinone oxidoreductase chain 3">
    <location>
        <begin position="1"/>
        <end position="116"/>
    </location>
</feature>
<feature type="transmembrane region" description="Helical" evidence="2">
    <location>
        <begin position="3"/>
        <end position="23"/>
    </location>
</feature>
<feature type="transmembrane region" description="Helical" evidence="2">
    <location>
        <begin position="56"/>
        <end position="76"/>
    </location>
</feature>
<feature type="transmembrane region" description="Helical" evidence="2">
    <location>
        <begin position="85"/>
        <end position="105"/>
    </location>
</feature>
<geneLocation type="mitochondrion"/>
<dbReference type="EC" id="7.1.1.2"/>
<dbReference type="EMBL" id="AB000674">
    <property type="protein sequence ID" value="BAA19159.1"/>
    <property type="molecule type" value="Genomic_DNA"/>
</dbReference>
<dbReference type="RefSeq" id="NP_037589.1">
    <property type="nucleotide sequence ID" value="NC_002386.1"/>
</dbReference>
<dbReference type="SMR" id="P92817"/>
<dbReference type="GeneID" id="808844"/>
<dbReference type="KEGG" id="pov:808844"/>
<dbReference type="CTD" id="4537"/>
<dbReference type="OrthoDB" id="154075at2759"/>
<dbReference type="GO" id="GO:0031966">
    <property type="term" value="C:mitochondrial membrane"/>
    <property type="evidence" value="ECO:0007669"/>
    <property type="project" value="UniProtKB-SubCell"/>
</dbReference>
<dbReference type="GO" id="GO:0030964">
    <property type="term" value="C:NADH dehydrogenase complex"/>
    <property type="evidence" value="ECO:0007669"/>
    <property type="project" value="TreeGrafter"/>
</dbReference>
<dbReference type="GO" id="GO:0008137">
    <property type="term" value="F:NADH dehydrogenase (ubiquinone) activity"/>
    <property type="evidence" value="ECO:0007669"/>
    <property type="project" value="UniProtKB-EC"/>
</dbReference>
<dbReference type="FunFam" id="1.20.58.1610:FF:000004">
    <property type="entry name" value="NADH-quinone oxidoreductase subunit A"/>
    <property type="match status" value="1"/>
</dbReference>
<dbReference type="Gene3D" id="1.20.58.1610">
    <property type="entry name" value="NADH:ubiquinone/plastoquinone oxidoreductase, chain 3"/>
    <property type="match status" value="1"/>
</dbReference>
<dbReference type="InterPro" id="IPR000440">
    <property type="entry name" value="NADH_UbQ/plastoQ_OxRdtase_su3"/>
</dbReference>
<dbReference type="InterPro" id="IPR038430">
    <property type="entry name" value="NDAH_ubi_oxred_su3_sf"/>
</dbReference>
<dbReference type="PANTHER" id="PTHR11058">
    <property type="entry name" value="NADH-UBIQUINONE OXIDOREDUCTASE CHAIN 3"/>
    <property type="match status" value="1"/>
</dbReference>
<dbReference type="PANTHER" id="PTHR11058:SF9">
    <property type="entry name" value="NADH-UBIQUINONE OXIDOREDUCTASE CHAIN 3"/>
    <property type="match status" value="1"/>
</dbReference>
<dbReference type="Pfam" id="PF00507">
    <property type="entry name" value="Oxidored_q4"/>
    <property type="match status" value="1"/>
</dbReference>
<sequence length="116" mass="13097">MSLLMTIITITALLSTILAIVSFWLPQISPDHEKLSPYECGFDPMGSARLPFSLRFFLIAILFLLFDLEIALLLPLPWGDQLPTPLLTFTWATAVLFLLTLGLIYEWIQGGLEWAE</sequence>
<organism>
    <name type="scientific">Paralichthys olivaceus</name>
    <name type="common">Bastard halibut</name>
    <name type="synonym">Hippoglossus olivaceus</name>
    <dbReference type="NCBI Taxonomy" id="8255"/>
    <lineage>
        <taxon>Eukaryota</taxon>
        <taxon>Metazoa</taxon>
        <taxon>Chordata</taxon>
        <taxon>Craniata</taxon>
        <taxon>Vertebrata</taxon>
        <taxon>Euteleostomi</taxon>
        <taxon>Actinopterygii</taxon>
        <taxon>Neopterygii</taxon>
        <taxon>Teleostei</taxon>
        <taxon>Neoteleostei</taxon>
        <taxon>Acanthomorphata</taxon>
        <taxon>Carangaria</taxon>
        <taxon>Pleuronectiformes</taxon>
        <taxon>Pleuronectoidei</taxon>
        <taxon>Paralichthyidae</taxon>
        <taxon>Paralichthys</taxon>
    </lineage>
</organism>
<proteinExistence type="inferred from homology"/>